<proteinExistence type="inferred from homology"/>
<name>LPXB_SYNY3</name>
<sequence length="394" mass="43468">MRIFISTGEVSGDLQGSLLVGALRQQAEEQNLELELVGLGGEKMAAAGLTLLANTAAIGSVGLTESLRFIIPTWQIQQRVKRYLKTNPIDLLVLIDYMGPNLTIANYLRKTYPNLPILYYIAPQAWVWSPTKRETAQIMAVTDRLLAIFPGEAEFFQKQGLDVTWVGHPLLDRITKEAPSRGSAREKLGIDHNETVITLLPASRIQELRYLLPSICGAAQQLQSQLPNVKLLLPVSLKDYQPQIEQTLKEFNLTVQLLEGKETLTAIAAADLAITKSGTVNLEIALLNVPQVILYRVSPLTMAIARRIFKFNLPFVSPTNIVLNRGIMPELLQEQATASNIAQAGLELLLNGDRQAKIAQDYQELREALGEPGVCERAAQAVLEFANGQQKSRA</sequence>
<gene>
    <name type="primary">lpxB</name>
    <name type="ordered locus">slr0015</name>
</gene>
<comment type="function">
    <text evidence="1">Condensation of UDP-2,3-diacylglucosamine and 2,3-diacylglucosamine-1-phosphate to form lipid A disaccharide, a precursor of lipid A, a phosphorylated glycolipid that anchors the lipopolysaccharide to the outer membrane of the cell.</text>
</comment>
<comment type="catalytic activity">
    <reaction>
        <text>a lipid X + a UDP-2-N,3-O-bis[(3R)-3-hydroxyacyl]-alpha-D-glucosamine = a lipid A disaccharide + UDP + H(+)</text>
        <dbReference type="Rhea" id="RHEA:67828"/>
        <dbReference type="ChEBI" id="CHEBI:15378"/>
        <dbReference type="ChEBI" id="CHEBI:58223"/>
        <dbReference type="ChEBI" id="CHEBI:137748"/>
        <dbReference type="ChEBI" id="CHEBI:176338"/>
        <dbReference type="ChEBI" id="CHEBI:176343"/>
        <dbReference type="EC" id="2.4.1.182"/>
    </reaction>
</comment>
<comment type="pathway">
    <text>Bacterial outer membrane biogenesis; LPS lipid A biosynthesis.</text>
</comment>
<comment type="similarity">
    <text evidence="2">Belongs to the LpxB family.</text>
</comment>
<organism>
    <name type="scientific">Synechocystis sp. (strain ATCC 27184 / PCC 6803 / Kazusa)</name>
    <dbReference type="NCBI Taxonomy" id="1111708"/>
    <lineage>
        <taxon>Bacteria</taxon>
        <taxon>Bacillati</taxon>
        <taxon>Cyanobacteriota</taxon>
        <taxon>Cyanophyceae</taxon>
        <taxon>Synechococcales</taxon>
        <taxon>Merismopediaceae</taxon>
        <taxon>Synechocystis</taxon>
    </lineage>
</organism>
<feature type="chain" id="PRO_0000190187" description="Lipid-A-disaccharide synthase">
    <location>
        <begin position="1"/>
        <end position="394"/>
    </location>
</feature>
<keyword id="KW-0328">Glycosyltransferase</keyword>
<keyword id="KW-0441">Lipid A biosynthesis</keyword>
<keyword id="KW-0444">Lipid biosynthesis</keyword>
<keyword id="KW-0443">Lipid metabolism</keyword>
<keyword id="KW-1185">Reference proteome</keyword>
<keyword id="KW-0808">Transferase</keyword>
<evidence type="ECO:0000250" key="1"/>
<evidence type="ECO:0000305" key="2"/>
<protein>
    <recommendedName>
        <fullName>Lipid-A-disaccharide synthase</fullName>
        <ecNumber>2.4.1.182</ecNumber>
    </recommendedName>
</protein>
<accession>Q57310</accession>
<dbReference type="EC" id="2.4.1.182"/>
<dbReference type="EMBL" id="U38802">
    <property type="protein sequence ID" value="AAB72026.1"/>
    <property type="molecule type" value="Genomic_DNA"/>
</dbReference>
<dbReference type="EMBL" id="BA000022">
    <property type="protein sequence ID" value="BAA10196.1"/>
    <property type="molecule type" value="Genomic_DNA"/>
</dbReference>
<dbReference type="PIR" id="S76344">
    <property type="entry name" value="S76344"/>
</dbReference>
<dbReference type="SMR" id="Q57310"/>
<dbReference type="IntAct" id="Q57310">
    <property type="interactions" value="1"/>
</dbReference>
<dbReference type="STRING" id="1148.gene:10499693"/>
<dbReference type="CAZy" id="GT19">
    <property type="family name" value="Glycosyltransferase Family 19"/>
</dbReference>
<dbReference type="PaxDb" id="1148-1001569"/>
<dbReference type="EnsemblBacteria" id="BAA10196">
    <property type="protein sequence ID" value="BAA10196"/>
    <property type="gene ID" value="BAA10196"/>
</dbReference>
<dbReference type="KEGG" id="syn:slr0015"/>
<dbReference type="eggNOG" id="COG0763">
    <property type="taxonomic scope" value="Bacteria"/>
</dbReference>
<dbReference type="InParanoid" id="Q57310"/>
<dbReference type="PhylomeDB" id="Q57310"/>
<dbReference type="UniPathway" id="UPA00973"/>
<dbReference type="Proteomes" id="UP000001425">
    <property type="component" value="Chromosome"/>
</dbReference>
<dbReference type="GO" id="GO:0016020">
    <property type="term" value="C:membrane"/>
    <property type="evidence" value="ECO:0007669"/>
    <property type="project" value="GOC"/>
</dbReference>
<dbReference type="GO" id="GO:0008915">
    <property type="term" value="F:lipid-A-disaccharide synthase activity"/>
    <property type="evidence" value="ECO:0007669"/>
    <property type="project" value="UniProtKB-UniRule"/>
</dbReference>
<dbReference type="GO" id="GO:0005543">
    <property type="term" value="F:phospholipid binding"/>
    <property type="evidence" value="ECO:0000318"/>
    <property type="project" value="GO_Central"/>
</dbReference>
<dbReference type="GO" id="GO:0009245">
    <property type="term" value="P:lipid A biosynthetic process"/>
    <property type="evidence" value="ECO:0000318"/>
    <property type="project" value="GO_Central"/>
</dbReference>
<dbReference type="HAMAP" id="MF_00392">
    <property type="entry name" value="LpxB"/>
    <property type="match status" value="1"/>
</dbReference>
<dbReference type="InterPro" id="IPR003835">
    <property type="entry name" value="Glyco_trans_19"/>
</dbReference>
<dbReference type="NCBIfam" id="TIGR00215">
    <property type="entry name" value="lpxB"/>
    <property type="match status" value="1"/>
</dbReference>
<dbReference type="PANTHER" id="PTHR30372">
    <property type="entry name" value="LIPID-A-DISACCHARIDE SYNTHASE"/>
    <property type="match status" value="1"/>
</dbReference>
<dbReference type="PANTHER" id="PTHR30372:SF4">
    <property type="entry name" value="LIPID-A-DISACCHARIDE SYNTHASE, MITOCHONDRIAL-RELATED"/>
    <property type="match status" value="1"/>
</dbReference>
<dbReference type="Pfam" id="PF02684">
    <property type="entry name" value="LpxB"/>
    <property type="match status" value="1"/>
</dbReference>
<dbReference type="SUPFAM" id="SSF53756">
    <property type="entry name" value="UDP-Glycosyltransferase/glycogen phosphorylase"/>
    <property type="match status" value="1"/>
</dbReference>
<reference key="1">
    <citation type="submission" date="1996-04" db="EMBL/GenBank/DDBJ databases">
        <authorList>
            <person name="Cassier-Chauvat C."/>
            <person name="Poncelet M."/>
            <person name="Villoing S."/>
            <person name="Chauvat F."/>
        </authorList>
    </citation>
    <scope>NUCLEOTIDE SEQUENCE [GENOMIC DNA]</scope>
</reference>
<reference key="2">
    <citation type="journal article" date="1995" name="DNA Res.">
        <title>Sequence analysis of the genome of the unicellular cyanobacterium Synechocystis sp. strain PCC6803. I. Sequence features in the 1 Mb region from map positions 64% to 92% of the genome.</title>
        <authorList>
            <person name="Kaneko T."/>
            <person name="Tanaka A."/>
            <person name="Sato S."/>
            <person name="Kotani H."/>
            <person name="Sazuka T."/>
            <person name="Miyajima N."/>
            <person name="Sugiura M."/>
            <person name="Tabata S."/>
        </authorList>
    </citation>
    <scope>NUCLEOTIDE SEQUENCE [LARGE SCALE GENOMIC DNA]</scope>
    <source>
        <strain>ATCC 27184 / PCC 6803 / N-1</strain>
    </source>
</reference>
<reference key="3">
    <citation type="journal article" date="1996" name="DNA Res.">
        <title>Sequence analysis of the genome of the unicellular cyanobacterium Synechocystis sp. strain PCC6803. II. Sequence determination of the entire genome and assignment of potential protein-coding regions.</title>
        <authorList>
            <person name="Kaneko T."/>
            <person name="Sato S."/>
            <person name="Kotani H."/>
            <person name="Tanaka A."/>
            <person name="Asamizu E."/>
            <person name="Nakamura Y."/>
            <person name="Miyajima N."/>
            <person name="Hirosawa M."/>
            <person name="Sugiura M."/>
            <person name="Sasamoto S."/>
            <person name="Kimura T."/>
            <person name="Hosouchi T."/>
            <person name="Matsuno A."/>
            <person name="Muraki A."/>
            <person name="Nakazaki N."/>
            <person name="Naruo K."/>
            <person name="Okumura S."/>
            <person name="Shimpo S."/>
            <person name="Takeuchi C."/>
            <person name="Wada T."/>
            <person name="Watanabe A."/>
            <person name="Yamada M."/>
            <person name="Yasuda M."/>
            <person name="Tabata S."/>
        </authorList>
    </citation>
    <scope>NUCLEOTIDE SEQUENCE [LARGE SCALE GENOMIC DNA]</scope>
    <source>
        <strain>ATCC 27184 / PCC 6803 / Kazusa</strain>
    </source>
</reference>